<gene>
    <name type="primary">yqbJ</name>
    <name type="ordered locus">BSU26090</name>
</gene>
<name>YQBJ_BACSU</name>
<proteinExistence type="predicted"/>
<reference key="1">
    <citation type="journal article" date="1995" name="Microbiology">
        <title>Complete nucleotide sequence of a skin element excised by DNA rearrangement during sporulation in Bacillus subtilis.</title>
        <authorList>
            <person name="Takemaru K."/>
            <person name="Mizuno M."/>
            <person name="Sato T."/>
            <person name="Takeuchi M."/>
            <person name="Kobayashi Y."/>
        </authorList>
    </citation>
    <scope>NUCLEOTIDE SEQUENCE [GENOMIC DNA]</scope>
    <source>
        <strain>168 / JH642</strain>
    </source>
</reference>
<reference key="2">
    <citation type="journal article" date="1996" name="Microbiology">
        <title>Systematic sequencing of the 283 kb 210 degrees-232 degrees region of the Bacillus subtilis genome containing the skin element and many sporulation genes.</title>
        <authorList>
            <person name="Mizuno M."/>
            <person name="Masuda S."/>
            <person name="Takemaru K."/>
            <person name="Hosono S."/>
            <person name="Sato T."/>
            <person name="Takeuchi M."/>
            <person name="Kobayashi Y."/>
        </authorList>
    </citation>
    <scope>NUCLEOTIDE SEQUENCE [GENOMIC DNA]</scope>
    <source>
        <strain>168 / JH642</strain>
    </source>
</reference>
<reference key="3">
    <citation type="journal article" date="1997" name="Nature">
        <title>The complete genome sequence of the Gram-positive bacterium Bacillus subtilis.</title>
        <authorList>
            <person name="Kunst F."/>
            <person name="Ogasawara N."/>
            <person name="Moszer I."/>
            <person name="Albertini A.M."/>
            <person name="Alloni G."/>
            <person name="Azevedo V."/>
            <person name="Bertero M.G."/>
            <person name="Bessieres P."/>
            <person name="Bolotin A."/>
            <person name="Borchert S."/>
            <person name="Borriss R."/>
            <person name="Boursier L."/>
            <person name="Brans A."/>
            <person name="Braun M."/>
            <person name="Brignell S.C."/>
            <person name="Bron S."/>
            <person name="Brouillet S."/>
            <person name="Bruschi C.V."/>
            <person name="Caldwell B."/>
            <person name="Capuano V."/>
            <person name="Carter N.M."/>
            <person name="Choi S.-K."/>
            <person name="Codani J.-J."/>
            <person name="Connerton I.F."/>
            <person name="Cummings N.J."/>
            <person name="Daniel R.A."/>
            <person name="Denizot F."/>
            <person name="Devine K.M."/>
            <person name="Duesterhoeft A."/>
            <person name="Ehrlich S.D."/>
            <person name="Emmerson P.T."/>
            <person name="Entian K.-D."/>
            <person name="Errington J."/>
            <person name="Fabret C."/>
            <person name="Ferrari E."/>
            <person name="Foulger D."/>
            <person name="Fritz C."/>
            <person name="Fujita M."/>
            <person name="Fujita Y."/>
            <person name="Fuma S."/>
            <person name="Galizzi A."/>
            <person name="Galleron N."/>
            <person name="Ghim S.-Y."/>
            <person name="Glaser P."/>
            <person name="Goffeau A."/>
            <person name="Golightly E.J."/>
            <person name="Grandi G."/>
            <person name="Guiseppi G."/>
            <person name="Guy B.J."/>
            <person name="Haga K."/>
            <person name="Haiech J."/>
            <person name="Harwood C.R."/>
            <person name="Henaut A."/>
            <person name="Hilbert H."/>
            <person name="Holsappel S."/>
            <person name="Hosono S."/>
            <person name="Hullo M.-F."/>
            <person name="Itaya M."/>
            <person name="Jones L.-M."/>
            <person name="Joris B."/>
            <person name="Karamata D."/>
            <person name="Kasahara Y."/>
            <person name="Klaerr-Blanchard M."/>
            <person name="Klein C."/>
            <person name="Kobayashi Y."/>
            <person name="Koetter P."/>
            <person name="Koningstein G."/>
            <person name="Krogh S."/>
            <person name="Kumano M."/>
            <person name="Kurita K."/>
            <person name="Lapidus A."/>
            <person name="Lardinois S."/>
            <person name="Lauber J."/>
            <person name="Lazarevic V."/>
            <person name="Lee S.-M."/>
            <person name="Levine A."/>
            <person name="Liu H."/>
            <person name="Masuda S."/>
            <person name="Mauel C."/>
            <person name="Medigue C."/>
            <person name="Medina N."/>
            <person name="Mellado R.P."/>
            <person name="Mizuno M."/>
            <person name="Moestl D."/>
            <person name="Nakai S."/>
            <person name="Noback M."/>
            <person name="Noone D."/>
            <person name="O'Reilly M."/>
            <person name="Ogawa K."/>
            <person name="Ogiwara A."/>
            <person name="Oudega B."/>
            <person name="Park S.-H."/>
            <person name="Parro V."/>
            <person name="Pohl T.M."/>
            <person name="Portetelle D."/>
            <person name="Porwollik S."/>
            <person name="Prescott A.M."/>
            <person name="Presecan E."/>
            <person name="Pujic P."/>
            <person name="Purnelle B."/>
            <person name="Rapoport G."/>
            <person name="Rey M."/>
            <person name="Reynolds S."/>
            <person name="Rieger M."/>
            <person name="Rivolta C."/>
            <person name="Rocha E."/>
            <person name="Roche B."/>
            <person name="Rose M."/>
            <person name="Sadaie Y."/>
            <person name="Sato T."/>
            <person name="Scanlan E."/>
            <person name="Schleich S."/>
            <person name="Schroeter R."/>
            <person name="Scoffone F."/>
            <person name="Sekiguchi J."/>
            <person name="Sekowska A."/>
            <person name="Seror S.J."/>
            <person name="Serror P."/>
            <person name="Shin B.-S."/>
            <person name="Soldo B."/>
            <person name="Sorokin A."/>
            <person name="Tacconi E."/>
            <person name="Takagi T."/>
            <person name="Takahashi H."/>
            <person name="Takemaru K."/>
            <person name="Takeuchi M."/>
            <person name="Tamakoshi A."/>
            <person name="Tanaka T."/>
            <person name="Terpstra P."/>
            <person name="Tognoni A."/>
            <person name="Tosato V."/>
            <person name="Uchiyama S."/>
            <person name="Vandenbol M."/>
            <person name="Vannier F."/>
            <person name="Vassarotti A."/>
            <person name="Viari A."/>
            <person name="Wambutt R."/>
            <person name="Wedler E."/>
            <person name="Wedler H."/>
            <person name="Weitzenegger T."/>
            <person name="Winters P."/>
            <person name="Wipat A."/>
            <person name="Yamamoto H."/>
            <person name="Yamane K."/>
            <person name="Yasumoto K."/>
            <person name="Yata K."/>
            <person name="Yoshida K."/>
            <person name="Yoshikawa H.-F."/>
            <person name="Zumstein E."/>
            <person name="Yoshikawa H."/>
            <person name="Danchin A."/>
        </authorList>
    </citation>
    <scope>NUCLEOTIDE SEQUENCE [LARGE SCALE GENOMIC DNA]</scope>
    <source>
        <strain>168</strain>
    </source>
</reference>
<reference key="4">
    <citation type="journal article" date="2009" name="Microbiology">
        <title>From a consortium sequence to a unified sequence: the Bacillus subtilis 168 reference genome a decade later.</title>
        <authorList>
            <person name="Barbe V."/>
            <person name="Cruveiller S."/>
            <person name="Kunst F."/>
            <person name="Lenoble P."/>
            <person name="Meurice G."/>
            <person name="Sekowska A."/>
            <person name="Vallenet D."/>
            <person name="Wang T."/>
            <person name="Moszer I."/>
            <person name="Medigue C."/>
            <person name="Danchin A."/>
        </authorList>
    </citation>
    <scope>SEQUENCE REVISION TO 30 AND 92</scope>
</reference>
<reference key="5">
    <citation type="journal article" date="1995" name="Gene">
        <title>Analysis of a Bacillus subtilis genome fragment using a co-operative computer system prototype.</title>
        <authorList>
            <person name="Medigue C."/>
            <person name="Moszer I."/>
            <person name="Viari A."/>
            <person name="Danchin A."/>
        </authorList>
    </citation>
    <scope>IDENTIFICATION</scope>
</reference>
<feature type="chain" id="PRO_0000049761" description="Uncharacterized protein YqbJ">
    <location>
        <begin position="1"/>
        <end position="145"/>
    </location>
</feature>
<feature type="sequence conflict" description="In Ref. 1; BAA06942 and 2; BAA12405." evidence="1" ref="1 2">
    <original>A</original>
    <variation>S</variation>
    <location>
        <position position="30"/>
    </location>
</feature>
<feature type="sequence conflict" description="In Ref. 1; BAA06942 and 2; BAA12405." evidence="1" ref="1 2">
    <original>E</original>
    <variation>D</variation>
    <location>
        <position position="92"/>
    </location>
</feature>
<accession>P45926</accession>
<comment type="similarity">
    <text evidence="1">To B.subtilis XkdJ.</text>
</comment>
<organism>
    <name type="scientific">Bacillus subtilis (strain 168)</name>
    <dbReference type="NCBI Taxonomy" id="224308"/>
    <lineage>
        <taxon>Bacteria</taxon>
        <taxon>Bacillati</taxon>
        <taxon>Bacillota</taxon>
        <taxon>Bacilli</taxon>
        <taxon>Bacillales</taxon>
        <taxon>Bacillaceae</taxon>
        <taxon>Bacillus</taxon>
    </lineage>
</organism>
<evidence type="ECO:0000305" key="1"/>
<keyword id="KW-1185">Reference proteome</keyword>
<sequence length="145" mass="16795">MNQEVGSIMGYLYKLYPVQVYEEEIPQDFAVPSLYFPPASTVDGVDTVSTFQKAYVLNVKLFHENVQKAHNEAERIADTLRSRRGIIPLIQESGEDTGDFIRLSRIETRVSDDYATIVLNWTSRYWYEREDQRSIDGFKFKSGVK</sequence>
<dbReference type="EMBL" id="D32216">
    <property type="protein sequence ID" value="BAA06942.1"/>
    <property type="molecule type" value="Genomic_DNA"/>
</dbReference>
<dbReference type="EMBL" id="D84432">
    <property type="protein sequence ID" value="BAA12405.1"/>
    <property type="molecule type" value="Genomic_DNA"/>
</dbReference>
<dbReference type="EMBL" id="AL009126">
    <property type="protein sequence ID" value="CAB14550.2"/>
    <property type="molecule type" value="Genomic_DNA"/>
</dbReference>
<dbReference type="PIR" id="E69947">
    <property type="entry name" value="E69947"/>
</dbReference>
<dbReference type="RefSeq" id="NP_390486.2">
    <property type="nucleotide sequence ID" value="NC_000964.3"/>
</dbReference>
<dbReference type="RefSeq" id="WP_003229927.1">
    <property type="nucleotide sequence ID" value="NZ_OZ025638.1"/>
</dbReference>
<dbReference type="FunCoup" id="P45926">
    <property type="interactions" value="177"/>
</dbReference>
<dbReference type="STRING" id="224308.BSU26090"/>
<dbReference type="PaxDb" id="224308-BSU26090"/>
<dbReference type="EnsemblBacteria" id="CAB14550">
    <property type="protein sequence ID" value="CAB14550"/>
    <property type="gene ID" value="BSU_26090"/>
</dbReference>
<dbReference type="GeneID" id="937746"/>
<dbReference type="KEGG" id="bsu:BSU26090"/>
<dbReference type="PATRIC" id="fig|224308.179.peg.2835"/>
<dbReference type="eggNOG" id="ENOG502ZK27">
    <property type="taxonomic scope" value="Bacteria"/>
</dbReference>
<dbReference type="InParanoid" id="P45926"/>
<dbReference type="OrthoDB" id="2899407at2"/>
<dbReference type="BioCyc" id="BSUB:BSU26090-MONOMER"/>
<dbReference type="Proteomes" id="UP000001570">
    <property type="component" value="Chromosome"/>
</dbReference>
<dbReference type="InterPro" id="IPR049254">
    <property type="entry name" value="Phage_tail_terminator"/>
</dbReference>
<dbReference type="Pfam" id="PF20765">
    <property type="entry name" value="Phage_tail_terminator_8"/>
    <property type="match status" value="1"/>
</dbReference>
<protein>
    <recommendedName>
        <fullName>Uncharacterized protein YqbJ</fullName>
    </recommendedName>
</protein>